<reference key="1">
    <citation type="journal article" date="1997" name="Phytochemistry">
        <title>A trypsin inhibitor from snail medic seeds active against pest proteases.</title>
        <authorList>
            <person name="Ceciliani F."/>
            <person name="Tava A."/>
            <person name="Iori R."/>
            <person name="Mortarino M."/>
            <person name="Odoardi M."/>
            <person name="Ronchi S."/>
        </authorList>
    </citation>
    <scope>PROTEIN SEQUENCE</scope>
    <scope>FUNCTION</scope>
    <scope>MASS SPECTROMETRY</scope>
    <source>
        <strain>cv. Sava</strain>
        <tissue>Seed</tissue>
    </source>
</reference>
<reference key="2">
    <citation type="journal article" date="2003" name="Biochemistry">
        <title>Anticarcinogenic Bowman-Birk inhibitor isolated from snail medic seeds (Medicago scutellata): solution structure and analysis of self-association behavior.</title>
        <authorList>
            <person name="Catalano M."/>
            <person name="Ragona L."/>
            <person name="Molinari H."/>
            <person name="Tava A."/>
            <person name="Zetta L."/>
        </authorList>
    </citation>
    <scope>PROTEIN SEQUENCE</scope>
    <scope>SUBUNIT</scope>
    <scope>STRUCTURE BY NMR</scope>
    <scope>DISULFIDE BONDS</scope>
    <source>
        <strain>cv. Sava</strain>
        <tissue>Seed</tissue>
    </source>
</reference>
<reference key="3">
    <citation type="journal article" date="2007" name="J. Struct. Biol.">
        <title>Crystal structure of the anticarcinogenic Bowman-Birk inhibitor from snail medic (Medicago scutellata) seeds complexed with bovine trypsin.</title>
        <authorList>
            <person name="Capaldi S."/>
            <person name="Perduca M."/>
            <person name="Faggion B."/>
            <person name="Carrizo M.E."/>
            <person name="Tava A."/>
            <person name="Ragona L."/>
            <person name="Monaco H.L."/>
        </authorList>
    </citation>
    <scope>X-RAY CRYSTALLOGRAPHY (2.0 ANGSTROMS) IN COMPLEX WITH TRYPSIN</scope>
    <scope>DISULFIDE BONDS</scope>
</reference>
<evidence type="ECO:0000269" key="1">
    <source>
    </source>
</evidence>
<evidence type="ECO:0000269" key="2">
    <source>
    </source>
</evidence>
<evidence type="ECO:0000269" key="3">
    <source>
    </source>
</evidence>
<evidence type="ECO:0000305" key="4"/>
<evidence type="ECO:0007744" key="5">
    <source>
        <dbReference type="PDB" id="1MVZ"/>
    </source>
</evidence>
<evidence type="ECO:0007744" key="6">
    <source>
        <dbReference type="PDB" id="2ILN"/>
    </source>
</evidence>
<evidence type="ECO:0007829" key="7">
    <source>
        <dbReference type="PDB" id="1MVZ"/>
    </source>
</evidence>
<evidence type="ECO:0007829" key="8">
    <source>
        <dbReference type="PDB" id="2ILN"/>
    </source>
</evidence>
<dbReference type="PDB" id="1MVZ">
    <property type="method" value="NMR"/>
    <property type="chains" value="A=1-62"/>
</dbReference>
<dbReference type="PDB" id="2ILN">
    <property type="method" value="X-ray"/>
    <property type="resolution" value="2.00 A"/>
    <property type="chains" value="I=1-62"/>
</dbReference>
<dbReference type="PDBsum" id="1MVZ"/>
<dbReference type="PDBsum" id="2ILN"/>
<dbReference type="SMR" id="P80321"/>
<dbReference type="MEROPS" id="I12.003"/>
<dbReference type="EvolutionaryTrace" id="P80321"/>
<dbReference type="GO" id="GO:0005576">
    <property type="term" value="C:extracellular region"/>
    <property type="evidence" value="ECO:0007669"/>
    <property type="project" value="InterPro"/>
</dbReference>
<dbReference type="GO" id="GO:0004867">
    <property type="term" value="F:serine-type endopeptidase inhibitor activity"/>
    <property type="evidence" value="ECO:0007669"/>
    <property type="project" value="UniProtKB-KW"/>
</dbReference>
<dbReference type="CDD" id="cd00023">
    <property type="entry name" value="BBI"/>
    <property type="match status" value="1"/>
</dbReference>
<dbReference type="FunFam" id="2.10.69.10:FF:000001">
    <property type="entry name" value="Bowman-Birk type proteinase inhibitor"/>
    <property type="match status" value="1"/>
</dbReference>
<dbReference type="Gene3D" id="2.10.69.10">
    <property type="entry name" value="Cysteine Protease (Bromelain) Inhibitor, subunit H"/>
    <property type="match status" value="1"/>
</dbReference>
<dbReference type="InterPro" id="IPR035995">
    <property type="entry name" value="Bowman-Birk_prot_inh"/>
</dbReference>
<dbReference type="InterPro" id="IPR000877">
    <property type="entry name" value="Prot_inh_BBI"/>
</dbReference>
<dbReference type="Pfam" id="PF00228">
    <property type="entry name" value="Bowman-Birk_leg"/>
    <property type="match status" value="2"/>
</dbReference>
<dbReference type="SMART" id="SM00269">
    <property type="entry name" value="BowB"/>
    <property type="match status" value="1"/>
</dbReference>
<dbReference type="SUPFAM" id="SSF57247">
    <property type="entry name" value="Bowman-Birk inhibitor, BBI"/>
    <property type="match status" value="1"/>
</dbReference>
<dbReference type="PROSITE" id="PS00281">
    <property type="entry name" value="BOWMAN_BIRK"/>
    <property type="match status" value="1"/>
</dbReference>
<feature type="chain" id="PRO_0000105845" description="Bowman-Birk type proteinase inhibitor">
    <location>
        <begin position="1"/>
        <end position="62"/>
    </location>
</feature>
<feature type="site" description="Reactive bond for trypsin">
    <location>
        <begin position="16"/>
        <end position="17"/>
    </location>
</feature>
<feature type="site" description="Reactive bond for trypsin">
    <location>
        <begin position="42"/>
        <end position="43"/>
    </location>
</feature>
<feature type="disulfide bond" evidence="1 5">
    <location>
        <begin position="8"/>
        <end position="61"/>
    </location>
</feature>
<feature type="disulfide bond" evidence="1 2 5 6">
    <location>
        <begin position="9"/>
        <end position="24"/>
    </location>
</feature>
<feature type="disulfide bond" evidence="1 2 5 6">
    <location>
        <begin position="12"/>
        <end position="57"/>
    </location>
</feature>
<feature type="disulfide bond" evidence="1 2 5 6">
    <location>
        <begin position="14"/>
        <end position="22"/>
    </location>
</feature>
<feature type="disulfide bond" evidence="1 2 5 6">
    <location>
        <begin position="31"/>
        <end position="38"/>
    </location>
</feature>
<feature type="disulfide bond" evidence="1 2 5 6">
    <location>
        <begin position="35"/>
        <end position="50"/>
    </location>
</feature>
<feature type="disulfide bond" evidence="1 2 5 6">
    <location>
        <begin position="40"/>
        <end position="48"/>
    </location>
</feature>
<feature type="sequence conflict" description="In Ref. 1; AA sequence." evidence="4" ref="1">
    <original>R</original>
    <variation>L</variation>
    <location>
        <position position="42"/>
    </location>
</feature>
<feature type="sequence conflict" description="In Ref. 1; AA sequence." evidence="4" ref="1">
    <original>F</original>
    <variation>I</variation>
    <location>
        <position position="44"/>
    </location>
</feature>
<feature type="sequence conflict" description="In Ref. 1; AA sequence." evidence="4" ref="1">
    <original>R</original>
    <variation>H</variation>
    <location>
        <position position="49"/>
    </location>
</feature>
<feature type="sequence conflict" description="In Ref. 1; AA sequence." evidence="4" ref="1">
    <original>S</original>
    <variation>R</variation>
    <location>
        <position position="62"/>
    </location>
</feature>
<feature type="strand" evidence="7">
    <location>
        <begin position="9"/>
        <end position="11"/>
    </location>
</feature>
<feature type="strand" evidence="8">
    <location>
        <begin position="14"/>
        <end position="19"/>
    </location>
</feature>
<feature type="strand" evidence="8">
    <location>
        <begin position="27"/>
        <end position="29"/>
    </location>
</feature>
<feature type="strand" evidence="8">
    <location>
        <begin position="36"/>
        <end position="45"/>
    </location>
</feature>
<feature type="strand" evidence="8">
    <location>
        <begin position="48"/>
        <end position="50"/>
    </location>
</feature>
<feature type="strand" evidence="8">
    <location>
        <begin position="53"/>
        <end position="56"/>
    </location>
</feature>
<accession>P80321</accession>
<keyword id="KW-0002">3D-structure</keyword>
<keyword id="KW-0903">Direct protein sequencing</keyword>
<keyword id="KW-1015">Disulfide bond</keyword>
<keyword id="KW-0646">Protease inhibitor</keyword>
<keyword id="KW-0722">Serine protease inhibitor</keyword>
<proteinExistence type="evidence at protein level"/>
<comment type="function">
    <text evidence="3">Inhibits trypsin but not chymotrypsin. Inhibits the trypsin-like proteinase activity present in larvae of the crop pests Adoxophyes orana, Hyphantria cunea, Lobesia botrana and Ostrinia nubilalis.</text>
</comment>
<comment type="subunit">
    <text evidence="1 2">Forms a monomer at protein concentrations of below 1 mM. At concentrations of above 2 mM, self-associates.</text>
</comment>
<comment type="mass spectrometry"/>
<comment type="similarity">
    <text evidence="4">Belongs to the Bowman-Birk serine protease inhibitor family.</text>
</comment>
<name>IBB_MEDSC</name>
<organism>
    <name type="scientific">Medicago scutellata</name>
    <name type="common">Snail medic</name>
    <name type="synonym">Medicago polymorpha var. scutellata</name>
    <dbReference type="NCBI Taxonomy" id="36901"/>
    <lineage>
        <taxon>Eukaryota</taxon>
        <taxon>Viridiplantae</taxon>
        <taxon>Streptophyta</taxon>
        <taxon>Embryophyta</taxon>
        <taxon>Tracheophyta</taxon>
        <taxon>Spermatophyta</taxon>
        <taxon>Magnoliopsida</taxon>
        <taxon>eudicotyledons</taxon>
        <taxon>Gunneridae</taxon>
        <taxon>Pentapetalae</taxon>
        <taxon>rosids</taxon>
        <taxon>fabids</taxon>
        <taxon>Fabales</taxon>
        <taxon>Fabaceae</taxon>
        <taxon>Papilionoideae</taxon>
        <taxon>50 kb inversion clade</taxon>
        <taxon>NPAAA clade</taxon>
        <taxon>Hologalegina</taxon>
        <taxon>IRL clade</taxon>
        <taxon>Trifolieae</taxon>
        <taxon>Medicago</taxon>
    </lineage>
</organism>
<protein>
    <recommendedName>
        <fullName>Bowman-Birk type proteinase inhibitor</fullName>
    </recommendedName>
    <alternativeName>
        <fullName>MSTI</fullName>
    </alternativeName>
</protein>
<sequence>TKSTTTACCDFCPCTRSIPPQCQCTDVREKCHSACKSCLCTRSFPPQCRCYDITDFCYPSCS</sequence>